<name>EWS_MOUSE</name>
<accession>Q61545</accession>
<accession>Q9D2P0</accession>
<sequence length="655" mass="68462">MASTDYSTYSQAAAQQGYSAYTAQPTQGYAQTTQAYGQQSYGTYGQPTDVSYTQAQTTATYGQTAYATSYGQPPTGYSTPTAPQAYSQPVQGYGTGTYDSTTATVTTTQASYAAQTAYGTQPAYPTYGQQPTATAPTRPQDGNKPAETSQPQSSTGGYNQPSLGYGQSNYSYPQVPGSYPMQPVTAPPSYPPTSYSSSQPTSYDQSSYSQQNTYGQPSSYGQQSSYGQQSSYGQQPPTSYPPQTGSYSQAPSQYSQQSSSYGQQSSFRQDHPSSMGVYGQESGGFSGPGENRSLSGPDNRGRGRGGFDRGGMSRGGRGGGRGGLGAGERGGFNKPGGPMDEGPDLDLGLPIDPDEDSDNSAIYVQGLNDNVTLDDLADFFKQCGVVKMNKRTGQPMIHIYLDKETGKPKGDATVSYEDPPTAKAAVEWFDGKDFQGSKLKVSLARKKPPMNSMRGGMPPREGRGMPPPLRGGPGGPGGPGGPMGRMGGRGGDRGGFPPRGPRGSRGNPSGGGNVQHRAGDWQCPNPGCGNQNFAWRTECNQCKAPKPEGFLPPPFPPPGGDRGRGGPGGMRGGRGGLMDRGGPGGMFRGGRGGDRGGFRGGRGMDRGGFGGGRRGGPGGPPGPLMEQMGGRRGGRGGPGKMDKGEHRQERRDRPY</sequence>
<feature type="chain" id="PRO_0000081587" description="RNA-binding protein EWS">
    <location>
        <begin position="1"/>
        <end position="655"/>
    </location>
</feature>
<feature type="repeat" description="1">
    <location>
        <begin position="8"/>
        <end position="16"/>
    </location>
</feature>
<feature type="repeat" description="2">
    <location>
        <begin position="17"/>
        <end position="27"/>
    </location>
</feature>
<feature type="repeat" description="3">
    <location>
        <begin position="28"/>
        <end position="34"/>
    </location>
</feature>
<feature type="repeat" description="4">
    <location>
        <begin position="35"/>
        <end position="42"/>
    </location>
</feature>
<feature type="repeat" description="5">
    <location>
        <begin position="43"/>
        <end position="50"/>
    </location>
</feature>
<feature type="repeat" description="6">
    <location>
        <begin position="51"/>
        <end position="59"/>
    </location>
</feature>
<feature type="repeat" description="7">
    <location>
        <begin position="60"/>
        <end position="68"/>
    </location>
</feature>
<feature type="repeat" description="8">
    <location>
        <begin position="69"/>
        <end position="75"/>
    </location>
</feature>
<feature type="repeat" description="9">
    <location>
        <begin position="76"/>
        <end position="84"/>
    </location>
</feature>
<feature type="repeat" description="10">
    <location>
        <begin position="85"/>
        <end position="91"/>
    </location>
</feature>
<feature type="repeat" description="11">
    <location>
        <begin position="92"/>
        <end position="110"/>
    </location>
</feature>
<feature type="repeat" description="12">
    <location>
        <begin position="111"/>
        <end position="116"/>
    </location>
</feature>
<feature type="repeat" description="13">
    <location>
        <begin position="117"/>
        <end position="125"/>
    </location>
</feature>
<feature type="repeat" description="14">
    <location>
        <begin position="126"/>
        <end position="156"/>
    </location>
</feature>
<feature type="repeat" description="15">
    <location>
        <begin position="157"/>
        <end position="163"/>
    </location>
</feature>
<feature type="repeat" description="16">
    <location>
        <begin position="164"/>
        <end position="170"/>
    </location>
</feature>
<feature type="repeat" description="17">
    <location>
        <begin position="171"/>
        <end position="177"/>
    </location>
</feature>
<feature type="repeat" description="18">
    <location>
        <begin position="178"/>
        <end position="188"/>
    </location>
</feature>
<feature type="repeat" description="19">
    <location>
        <begin position="189"/>
        <end position="193"/>
    </location>
</feature>
<feature type="repeat" description="20">
    <location>
        <begin position="194"/>
        <end position="201"/>
    </location>
</feature>
<feature type="repeat" description="21">
    <location>
        <begin position="202"/>
        <end position="206"/>
    </location>
</feature>
<feature type="repeat" description="22">
    <location>
        <begin position="207"/>
        <end position="212"/>
    </location>
</feature>
<feature type="repeat" description="23">
    <location>
        <begin position="213"/>
        <end position="218"/>
    </location>
</feature>
<feature type="repeat" description="24">
    <location>
        <begin position="219"/>
        <end position="224"/>
    </location>
</feature>
<feature type="repeat" description="25">
    <location>
        <begin position="225"/>
        <end position="230"/>
    </location>
</feature>
<feature type="repeat" description="26">
    <location>
        <begin position="231"/>
        <end position="238"/>
    </location>
</feature>
<feature type="repeat" description="27">
    <location>
        <begin position="239"/>
        <end position="245"/>
    </location>
</feature>
<feature type="repeat" description="28">
    <location>
        <begin position="246"/>
        <end position="252"/>
    </location>
</feature>
<feature type="repeat" description="29">
    <location>
        <begin position="253"/>
        <end position="259"/>
    </location>
</feature>
<feature type="domain" description="IQ">
    <location>
        <begin position="256"/>
        <end position="285"/>
    </location>
</feature>
<feature type="repeat" description="30">
    <location>
        <begin position="260"/>
        <end position="276"/>
    </location>
</feature>
<feature type="repeat" description="31">
    <location>
        <begin position="277"/>
        <end position="285"/>
    </location>
</feature>
<feature type="domain" description="RRM" evidence="3">
    <location>
        <begin position="360"/>
        <end position="446"/>
    </location>
</feature>
<feature type="zinc finger region" description="RanBP2-type" evidence="4">
    <location>
        <begin position="517"/>
        <end position="548"/>
    </location>
</feature>
<feature type="region of interest" description="EAD (Gln/Pro/Thr-rich)">
    <location>
        <begin position="1"/>
        <end position="285"/>
    </location>
</feature>
<feature type="region of interest" description="31 X approximate tandem repeats">
    <location>
        <begin position="8"/>
        <end position="285"/>
    </location>
</feature>
<feature type="region of interest" description="Disordered" evidence="5">
    <location>
        <begin position="121"/>
        <end position="350"/>
    </location>
</feature>
<feature type="region of interest" description="Disordered" evidence="5">
    <location>
        <begin position="447"/>
        <end position="524"/>
    </location>
</feature>
<feature type="region of interest" description="Disordered" evidence="5">
    <location>
        <begin position="544"/>
        <end position="655"/>
    </location>
</feature>
<feature type="short sequence motif" description="Nuclear localization signal" evidence="1">
    <location>
        <begin position="638"/>
        <end position="655"/>
    </location>
</feature>
<feature type="compositionally biased region" description="Polar residues" evidence="5">
    <location>
        <begin position="127"/>
        <end position="137"/>
    </location>
</feature>
<feature type="compositionally biased region" description="Polar residues" evidence="5">
    <location>
        <begin position="146"/>
        <end position="172"/>
    </location>
</feature>
<feature type="compositionally biased region" description="Low complexity" evidence="5">
    <location>
        <begin position="192"/>
        <end position="266"/>
    </location>
</feature>
<feature type="compositionally biased region" description="Gly residues" evidence="5">
    <location>
        <begin position="308"/>
        <end position="334"/>
    </location>
</feature>
<feature type="compositionally biased region" description="Low complexity" evidence="5">
    <location>
        <begin position="335"/>
        <end position="350"/>
    </location>
</feature>
<feature type="compositionally biased region" description="Gly residues" evidence="5">
    <location>
        <begin position="471"/>
        <end position="489"/>
    </location>
</feature>
<feature type="compositionally biased region" description="Pro residues" evidence="5">
    <location>
        <begin position="550"/>
        <end position="559"/>
    </location>
</feature>
<feature type="compositionally biased region" description="Gly residues" evidence="5">
    <location>
        <begin position="565"/>
        <end position="590"/>
    </location>
</feature>
<feature type="compositionally biased region" description="Basic and acidic residues" evidence="5">
    <location>
        <begin position="591"/>
        <end position="605"/>
    </location>
</feature>
<feature type="compositionally biased region" description="Gly residues" evidence="5">
    <location>
        <begin position="606"/>
        <end position="617"/>
    </location>
</feature>
<feature type="compositionally biased region" description="Basic and acidic residues" evidence="5">
    <location>
        <begin position="640"/>
        <end position="655"/>
    </location>
</feature>
<feature type="modified residue" description="Phosphoserine; by PKC" evidence="1">
    <location>
        <position position="266"/>
    </location>
</feature>
<feature type="modified residue" description="Asymmetric dimethylarginine" evidence="2">
    <location>
        <position position="300"/>
    </location>
</feature>
<feature type="modified residue" description="Asymmetric dimethylarginine" evidence="2">
    <location>
        <position position="302"/>
    </location>
</feature>
<feature type="modified residue" description="Asymmetric dimethylarginine" evidence="2">
    <location>
        <position position="304"/>
    </location>
</feature>
<feature type="modified residue" description="Asymmetric dimethylarginine" evidence="2">
    <location>
        <position position="309"/>
    </location>
</feature>
<feature type="modified residue" description="Asymmetric dimethylarginine" evidence="2">
    <location>
        <position position="314"/>
    </location>
</feature>
<feature type="modified residue" description="Asymmetric dimethylarginine" evidence="2">
    <location>
        <position position="317"/>
    </location>
</feature>
<feature type="modified residue" description="Asymmetric dimethylarginine" evidence="2">
    <location>
        <position position="321"/>
    </location>
</feature>
<feature type="modified residue" description="N6-acetyllysine" evidence="8">
    <location>
        <position position="438"/>
    </location>
</feature>
<feature type="modified residue" description="Asymmetric dimethylarginine" evidence="2">
    <location>
        <position position="454"/>
    </location>
</feature>
<feature type="modified residue" description="Asymmetric dimethylarginine" evidence="2">
    <location>
        <position position="463"/>
    </location>
</feature>
<feature type="modified residue" description="Asymmetric dimethylarginine; alternate" evidence="2">
    <location>
        <position position="470"/>
    </location>
</feature>
<feature type="modified residue" description="Omega-N-methylarginine; alternate" evidence="9">
    <location>
        <position position="470"/>
    </location>
</feature>
<feature type="modified residue" description="Omega-N-methylarginine" evidence="9">
    <location>
        <position position="485"/>
    </location>
</feature>
<feature type="modified residue" description="Asymmetric dimethylarginine; by PRMT8" evidence="2">
    <location>
        <position position="489"/>
    </location>
</feature>
<feature type="modified residue" description="Asymmetric dimethylarginine" evidence="2">
    <location>
        <position position="493"/>
    </location>
</feature>
<feature type="modified residue" description="Asymmetric dimethylarginine" evidence="2">
    <location>
        <position position="499"/>
    </location>
</feature>
<feature type="modified residue" description="Asymmetric dimethylarginine" evidence="9">
    <location>
        <position position="502"/>
    </location>
</feature>
<feature type="modified residue" description="Asymmetric dimethylarginine; alternate" evidence="9">
    <location>
        <position position="505"/>
    </location>
</feature>
<feature type="modified residue" description="Omega-N-methylarginine; alternate" evidence="9">
    <location>
        <position position="505"/>
    </location>
</feature>
<feature type="modified residue" description="Asymmetric dimethylarginine" evidence="2">
    <location>
        <position position="562"/>
    </location>
</feature>
<feature type="modified residue" description="Asymmetric dimethylarginine" evidence="2">
    <location>
        <position position="564"/>
    </location>
</feature>
<feature type="modified residue" description="Asymmetric dimethylarginine; alternate; by PRMT8" evidence="2">
    <location>
        <position position="571"/>
    </location>
</feature>
<feature type="modified residue" description="Omega-N-methylarginine; alternate; by PRMT8" evidence="2">
    <location>
        <position position="571"/>
    </location>
</feature>
<feature type="modified residue" description="Asymmetric dimethylarginine" evidence="2">
    <location>
        <position position="574"/>
    </location>
</feature>
<feature type="modified residue" description="Asymmetric dimethylarginine" evidence="2">
    <location>
        <position position="580"/>
    </location>
</feature>
<feature type="modified residue" description="Asymmetric dimethylarginine" evidence="2">
    <location>
        <position position="588"/>
    </location>
</feature>
<feature type="modified residue" description="Asymmetric dimethylarginine" evidence="2">
    <location>
        <position position="591"/>
    </location>
</feature>
<feature type="modified residue" description="Asymmetric dimethylarginine; alternate; by PRMT8" evidence="2">
    <location>
        <position position="595"/>
    </location>
</feature>
<feature type="modified residue" description="Omega-N-methylarginine; alternate; by PRMT8" evidence="2">
    <location>
        <position position="595"/>
    </location>
</feature>
<feature type="modified residue" description="Asymmetric dimethylarginine" evidence="2">
    <location>
        <position position="599"/>
    </location>
</feature>
<feature type="modified residue" description="Asymmetric dimethylarginine; by PRMT8" evidence="2">
    <location>
        <position position="602"/>
    </location>
</feature>
<feature type="modified residue" description="Asymmetric dimethylarginine; alternate; by PRMT8" evidence="2">
    <location>
        <position position="606"/>
    </location>
</feature>
<feature type="modified residue" description="Omega-N-methylarginine; alternate; by PRMT8" evidence="2">
    <location>
        <position position="606"/>
    </location>
</feature>
<feature type="modified residue" description="Asymmetric dimethylarginine; alternate" evidence="9">
    <location>
        <position position="614"/>
    </location>
</feature>
<feature type="modified residue" description="Omega-N-methylarginine; alternate" evidence="9">
    <location>
        <position position="614"/>
    </location>
</feature>
<feature type="modified residue" description="Asymmetric dimethylarginine" evidence="2">
    <location>
        <position position="632"/>
    </location>
</feature>
<feature type="modified residue" description="Asymmetric dimethylarginine" evidence="2">
    <location>
        <position position="635"/>
    </location>
</feature>
<feature type="sequence conflict" description="In Ref. 1; CAA55815." evidence="7" ref="1">
    <original>T</original>
    <variation>A</variation>
    <location>
        <position position="97"/>
    </location>
</feature>
<feature type="sequence conflict" description="In Ref. 1; CAA55815." evidence="7" ref="1">
    <original>T</original>
    <variation>S</variation>
    <location>
        <position position="116"/>
    </location>
</feature>
<organism>
    <name type="scientific">Mus musculus</name>
    <name type="common">Mouse</name>
    <dbReference type="NCBI Taxonomy" id="10090"/>
    <lineage>
        <taxon>Eukaryota</taxon>
        <taxon>Metazoa</taxon>
        <taxon>Chordata</taxon>
        <taxon>Craniata</taxon>
        <taxon>Vertebrata</taxon>
        <taxon>Euteleostomi</taxon>
        <taxon>Mammalia</taxon>
        <taxon>Eutheria</taxon>
        <taxon>Euarchontoglires</taxon>
        <taxon>Glires</taxon>
        <taxon>Rodentia</taxon>
        <taxon>Myomorpha</taxon>
        <taxon>Muroidea</taxon>
        <taxon>Muridae</taxon>
        <taxon>Murinae</taxon>
        <taxon>Mus</taxon>
        <taxon>Mus</taxon>
    </lineage>
</organism>
<dbReference type="EMBL" id="X79233">
    <property type="protein sequence ID" value="CAA55815.1"/>
    <property type="molecule type" value="mRNA"/>
</dbReference>
<dbReference type="EMBL" id="AK019460">
    <property type="protein sequence ID" value="BAB31732.1"/>
    <property type="molecule type" value="mRNA"/>
</dbReference>
<dbReference type="EMBL" id="AK151625">
    <property type="protein sequence ID" value="BAE30560.1"/>
    <property type="molecule type" value="mRNA"/>
</dbReference>
<dbReference type="EMBL" id="AL645845">
    <property type="status" value="NOT_ANNOTATED_CDS"/>
    <property type="molecule type" value="Genomic_DNA"/>
</dbReference>
<dbReference type="EMBL" id="CH466574">
    <property type="protein sequence ID" value="EDL40519.1"/>
    <property type="molecule type" value="Genomic_DNA"/>
</dbReference>
<dbReference type="CCDS" id="CCDS24396.1"/>
<dbReference type="PIR" id="A55726">
    <property type="entry name" value="A55726"/>
</dbReference>
<dbReference type="RefSeq" id="NP_031994.2">
    <property type="nucleotide sequence ID" value="NM_007968.4"/>
</dbReference>
<dbReference type="BMRB" id="Q61545"/>
<dbReference type="SMR" id="Q61545"/>
<dbReference type="BioGRID" id="199551">
    <property type="interactions" value="128"/>
</dbReference>
<dbReference type="FunCoup" id="Q61545">
    <property type="interactions" value="5116"/>
</dbReference>
<dbReference type="IntAct" id="Q61545">
    <property type="interactions" value="70"/>
</dbReference>
<dbReference type="MINT" id="Q61545"/>
<dbReference type="STRING" id="10090.ENSMUSP00000078867"/>
<dbReference type="GlyGen" id="Q61545">
    <property type="glycosylation" value="3 sites, 1 O-linked glycan (3 sites)"/>
</dbReference>
<dbReference type="iPTMnet" id="Q61545"/>
<dbReference type="PhosphoSitePlus" id="Q61545"/>
<dbReference type="SwissPalm" id="Q61545"/>
<dbReference type="jPOST" id="Q61545"/>
<dbReference type="PaxDb" id="10090-ENSMUSP00000078867"/>
<dbReference type="ProteomicsDB" id="271509"/>
<dbReference type="Pumba" id="Q61545"/>
<dbReference type="Antibodypedia" id="3786">
    <property type="antibodies" value="582 antibodies from 40 providers"/>
</dbReference>
<dbReference type="DNASU" id="14030"/>
<dbReference type="Ensembl" id="ENSMUST00000079949.13">
    <property type="protein sequence ID" value="ENSMUSP00000078867.7"/>
    <property type="gene ID" value="ENSMUSG00000009079.17"/>
</dbReference>
<dbReference type="GeneID" id="14030"/>
<dbReference type="KEGG" id="mmu:14030"/>
<dbReference type="UCSC" id="uc007hvw.2">
    <property type="organism name" value="mouse"/>
</dbReference>
<dbReference type="AGR" id="MGI:99960"/>
<dbReference type="CTD" id="2130"/>
<dbReference type="MGI" id="MGI:99960">
    <property type="gene designation" value="Ewsr1"/>
</dbReference>
<dbReference type="VEuPathDB" id="HostDB:ENSMUSG00000009079"/>
<dbReference type="eggNOG" id="KOG1995">
    <property type="taxonomic scope" value="Eukaryota"/>
</dbReference>
<dbReference type="GeneTree" id="ENSGT00940000154191"/>
<dbReference type="InParanoid" id="Q61545"/>
<dbReference type="TreeFam" id="TF322599"/>
<dbReference type="BioGRID-ORCS" id="14030">
    <property type="hits" value="15 hits in 81 CRISPR screens"/>
</dbReference>
<dbReference type="CD-CODE" id="764D0258">
    <property type="entry name" value="Neuronal RNP granule"/>
</dbReference>
<dbReference type="CD-CODE" id="C582EEC7">
    <property type="entry name" value="NONO"/>
</dbReference>
<dbReference type="CD-CODE" id="D12E4DB9">
    <property type="entry name" value="Stress granule"/>
</dbReference>
<dbReference type="CD-CODE" id="DE1E139C">
    <property type="entry name" value="Chromatoid body"/>
</dbReference>
<dbReference type="ChiTaRS" id="Ewsr1">
    <property type="organism name" value="mouse"/>
</dbReference>
<dbReference type="PRO" id="PR:Q61545"/>
<dbReference type="Proteomes" id="UP000000589">
    <property type="component" value="Chromosome 11"/>
</dbReference>
<dbReference type="RNAct" id="Q61545">
    <property type="molecule type" value="protein"/>
</dbReference>
<dbReference type="Bgee" id="ENSMUSG00000009079">
    <property type="expression patterns" value="Expressed in yolk sac and 256 other cell types or tissues"/>
</dbReference>
<dbReference type="ExpressionAtlas" id="Q61545">
    <property type="expression patterns" value="baseline and differential"/>
</dbReference>
<dbReference type="GO" id="GO:0005737">
    <property type="term" value="C:cytoplasm"/>
    <property type="evidence" value="ECO:0007669"/>
    <property type="project" value="UniProtKB-SubCell"/>
</dbReference>
<dbReference type="GO" id="GO:0005634">
    <property type="term" value="C:nucleus"/>
    <property type="evidence" value="ECO:0000314"/>
    <property type="project" value="UniProtKB"/>
</dbReference>
<dbReference type="GO" id="GO:0005886">
    <property type="term" value="C:plasma membrane"/>
    <property type="evidence" value="ECO:0007669"/>
    <property type="project" value="UniProtKB-SubCell"/>
</dbReference>
<dbReference type="GO" id="GO:0005516">
    <property type="term" value="F:calmodulin binding"/>
    <property type="evidence" value="ECO:0007669"/>
    <property type="project" value="UniProtKB-KW"/>
</dbReference>
<dbReference type="GO" id="GO:0003723">
    <property type="term" value="F:RNA binding"/>
    <property type="evidence" value="ECO:0007669"/>
    <property type="project" value="UniProtKB-KW"/>
</dbReference>
<dbReference type="GO" id="GO:0008270">
    <property type="term" value="F:zinc ion binding"/>
    <property type="evidence" value="ECO:0007669"/>
    <property type="project" value="UniProtKB-KW"/>
</dbReference>
<dbReference type="GO" id="GO:0006355">
    <property type="term" value="P:regulation of DNA-templated transcription"/>
    <property type="evidence" value="ECO:0007669"/>
    <property type="project" value="InterPro"/>
</dbReference>
<dbReference type="CDD" id="cd12533">
    <property type="entry name" value="RRM_EWS"/>
    <property type="match status" value="1"/>
</dbReference>
<dbReference type="FunFam" id="3.30.70.330:FF:000368">
    <property type="entry name" value="EWS RNA binding protein 1"/>
    <property type="match status" value="1"/>
</dbReference>
<dbReference type="FunFam" id="4.10.1060.10:FF:000002">
    <property type="entry name" value="RNA-binding protein EWS isoform 1"/>
    <property type="match status" value="1"/>
</dbReference>
<dbReference type="Gene3D" id="3.30.70.330">
    <property type="match status" value="1"/>
</dbReference>
<dbReference type="Gene3D" id="4.10.1060.10">
    <property type="entry name" value="Zinc finger, RanBP2-type"/>
    <property type="match status" value="1"/>
</dbReference>
<dbReference type="InterPro" id="IPR034869">
    <property type="entry name" value="EWS_RRM"/>
</dbReference>
<dbReference type="InterPro" id="IPR012677">
    <property type="entry name" value="Nucleotide-bd_a/b_plait_sf"/>
</dbReference>
<dbReference type="InterPro" id="IPR035979">
    <property type="entry name" value="RBD_domain_sf"/>
</dbReference>
<dbReference type="InterPro" id="IPR000504">
    <property type="entry name" value="RRM_dom"/>
</dbReference>
<dbReference type="InterPro" id="IPR034870">
    <property type="entry name" value="TET_fam"/>
</dbReference>
<dbReference type="InterPro" id="IPR001876">
    <property type="entry name" value="Znf_RanBP2"/>
</dbReference>
<dbReference type="InterPro" id="IPR036443">
    <property type="entry name" value="Znf_RanBP2_sf"/>
</dbReference>
<dbReference type="PANTHER" id="PTHR23238">
    <property type="entry name" value="RNA BINDING PROTEIN"/>
    <property type="match status" value="1"/>
</dbReference>
<dbReference type="Pfam" id="PF00076">
    <property type="entry name" value="RRM_1"/>
    <property type="match status" value="1"/>
</dbReference>
<dbReference type="Pfam" id="PF00641">
    <property type="entry name" value="Zn_ribbon_RanBP"/>
    <property type="match status" value="1"/>
</dbReference>
<dbReference type="SMART" id="SM00360">
    <property type="entry name" value="RRM"/>
    <property type="match status" value="1"/>
</dbReference>
<dbReference type="SMART" id="SM00547">
    <property type="entry name" value="ZnF_RBZ"/>
    <property type="match status" value="1"/>
</dbReference>
<dbReference type="SUPFAM" id="SSF90209">
    <property type="entry name" value="Ran binding protein zinc finger-like"/>
    <property type="match status" value="1"/>
</dbReference>
<dbReference type="SUPFAM" id="SSF54928">
    <property type="entry name" value="RNA-binding domain, RBD"/>
    <property type="match status" value="1"/>
</dbReference>
<dbReference type="PROSITE" id="PS50102">
    <property type="entry name" value="RRM"/>
    <property type="match status" value="1"/>
</dbReference>
<dbReference type="PROSITE" id="PS01358">
    <property type="entry name" value="ZF_RANBP2_1"/>
    <property type="match status" value="1"/>
</dbReference>
<dbReference type="PROSITE" id="PS50199">
    <property type="entry name" value="ZF_RANBP2_2"/>
    <property type="match status" value="1"/>
</dbReference>
<keyword id="KW-0007">Acetylation</keyword>
<keyword id="KW-0112">Calmodulin-binding</keyword>
<keyword id="KW-1003">Cell membrane</keyword>
<keyword id="KW-0963">Cytoplasm</keyword>
<keyword id="KW-0472">Membrane</keyword>
<keyword id="KW-0479">Metal-binding</keyword>
<keyword id="KW-0488">Methylation</keyword>
<keyword id="KW-0539">Nucleus</keyword>
<keyword id="KW-0597">Phosphoprotein</keyword>
<keyword id="KW-1185">Reference proteome</keyword>
<keyword id="KW-0677">Repeat</keyword>
<keyword id="KW-0678">Repressor</keyword>
<keyword id="KW-0694">RNA-binding</keyword>
<keyword id="KW-0804">Transcription</keyword>
<keyword id="KW-0805">Transcription regulation</keyword>
<keyword id="KW-0862">Zinc</keyword>
<keyword id="KW-0863">Zinc-finger</keyword>
<evidence type="ECO:0000250" key="1"/>
<evidence type="ECO:0000250" key="2">
    <source>
        <dbReference type="UniProtKB" id="Q01844"/>
    </source>
</evidence>
<evidence type="ECO:0000255" key="3">
    <source>
        <dbReference type="PROSITE-ProRule" id="PRU00176"/>
    </source>
</evidence>
<evidence type="ECO:0000255" key="4">
    <source>
        <dbReference type="PROSITE-ProRule" id="PRU00322"/>
    </source>
</evidence>
<evidence type="ECO:0000256" key="5">
    <source>
        <dbReference type="SAM" id="MobiDB-lite"/>
    </source>
</evidence>
<evidence type="ECO:0000269" key="6">
    <source>
    </source>
</evidence>
<evidence type="ECO:0000305" key="7"/>
<evidence type="ECO:0007744" key="8">
    <source>
    </source>
</evidence>
<evidence type="ECO:0007744" key="9">
    <source>
    </source>
</evidence>
<reference key="1">
    <citation type="journal article" date="1994" name="Genomics">
        <title>Cloning and chromosome localization of the mouse Ews gene.</title>
        <authorList>
            <person name="Plougastel B."/>
            <person name="Mattei M.-G."/>
            <person name="Thomas G."/>
            <person name="Delattre O."/>
        </authorList>
    </citation>
    <scope>NUCLEOTIDE SEQUENCE [MRNA]</scope>
    <source>
        <tissue>Testis</tissue>
    </source>
</reference>
<reference key="2">
    <citation type="journal article" date="2005" name="Science">
        <title>The transcriptional landscape of the mammalian genome.</title>
        <authorList>
            <person name="Carninci P."/>
            <person name="Kasukawa T."/>
            <person name="Katayama S."/>
            <person name="Gough J."/>
            <person name="Frith M.C."/>
            <person name="Maeda N."/>
            <person name="Oyama R."/>
            <person name="Ravasi T."/>
            <person name="Lenhard B."/>
            <person name="Wells C."/>
            <person name="Kodzius R."/>
            <person name="Shimokawa K."/>
            <person name="Bajic V.B."/>
            <person name="Brenner S.E."/>
            <person name="Batalov S."/>
            <person name="Forrest A.R."/>
            <person name="Zavolan M."/>
            <person name="Davis M.J."/>
            <person name="Wilming L.G."/>
            <person name="Aidinis V."/>
            <person name="Allen J.E."/>
            <person name="Ambesi-Impiombato A."/>
            <person name="Apweiler R."/>
            <person name="Aturaliya R.N."/>
            <person name="Bailey T.L."/>
            <person name="Bansal M."/>
            <person name="Baxter L."/>
            <person name="Beisel K.W."/>
            <person name="Bersano T."/>
            <person name="Bono H."/>
            <person name="Chalk A.M."/>
            <person name="Chiu K.P."/>
            <person name="Choudhary V."/>
            <person name="Christoffels A."/>
            <person name="Clutterbuck D.R."/>
            <person name="Crowe M.L."/>
            <person name="Dalla E."/>
            <person name="Dalrymple B.P."/>
            <person name="de Bono B."/>
            <person name="Della Gatta G."/>
            <person name="di Bernardo D."/>
            <person name="Down T."/>
            <person name="Engstrom P."/>
            <person name="Fagiolini M."/>
            <person name="Faulkner G."/>
            <person name="Fletcher C.F."/>
            <person name="Fukushima T."/>
            <person name="Furuno M."/>
            <person name="Futaki S."/>
            <person name="Gariboldi M."/>
            <person name="Georgii-Hemming P."/>
            <person name="Gingeras T.R."/>
            <person name="Gojobori T."/>
            <person name="Green R.E."/>
            <person name="Gustincich S."/>
            <person name="Harbers M."/>
            <person name="Hayashi Y."/>
            <person name="Hensch T.K."/>
            <person name="Hirokawa N."/>
            <person name="Hill D."/>
            <person name="Huminiecki L."/>
            <person name="Iacono M."/>
            <person name="Ikeo K."/>
            <person name="Iwama A."/>
            <person name="Ishikawa T."/>
            <person name="Jakt M."/>
            <person name="Kanapin A."/>
            <person name="Katoh M."/>
            <person name="Kawasawa Y."/>
            <person name="Kelso J."/>
            <person name="Kitamura H."/>
            <person name="Kitano H."/>
            <person name="Kollias G."/>
            <person name="Krishnan S.P."/>
            <person name="Kruger A."/>
            <person name="Kummerfeld S.K."/>
            <person name="Kurochkin I.V."/>
            <person name="Lareau L.F."/>
            <person name="Lazarevic D."/>
            <person name="Lipovich L."/>
            <person name="Liu J."/>
            <person name="Liuni S."/>
            <person name="McWilliam S."/>
            <person name="Madan Babu M."/>
            <person name="Madera M."/>
            <person name="Marchionni L."/>
            <person name="Matsuda H."/>
            <person name="Matsuzawa S."/>
            <person name="Miki H."/>
            <person name="Mignone F."/>
            <person name="Miyake S."/>
            <person name="Morris K."/>
            <person name="Mottagui-Tabar S."/>
            <person name="Mulder N."/>
            <person name="Nakano N."/>
            <person name="Nakauchi H."/>
            <person name="Ng P."/>
            <person name="Nilsson R."/>
            <person name="Nishiguchi S."/>
            <person name="Nishikawa S."/>
            <person name="Nori F."/>
            <person name="Ohara O."/>
            <person name="Okazaki Y."/>
            <person name="Orlando V."/>
            <person name="Pang K.C."/>
            <person name="Pavan W.J."/>
            <person name="Pavesi G."/>
            <person name="Pesole G."/>
            <person name="Petrovsky N."/>
            <person name="Piazza S."/>
            <person name="Reed J."/>
            <person name="Reid J.F."/>
            <person name="Ring B.Z."/>
            <person name="Ringwald M."/>
            <person name="Rost B."/>
            <person name="Ruan Y."/>
            <person name="Salzberg S.L."/>
            <person name="Sandelin A."/>
            <person name="Schneider C."/>
            <person name="Schoenbach C."/>
            <person name="Sekiguchi K."/>
            <person name="Semple C.A."/>
            <person name="Seno S."/>
            <person name="Sessa L."/>
            <person name="Sheng Y."/>
            <person name="Shibata Y."/>
            <person name="Shimada H."/>
            <person name="Shimada K."/>
            <person name="Silva D."/>
            <person name="Sinclair B."/>
            <person name="Sperling S."/>
            <person name="Stupka E."/>
            <person name="Sugiura K."/>
            <person name="Sultana R."/>
            <person name="Takenaka Y."/>
            <person name="Taki K."/>
            <person name="Tammoja K."/>
            <person name="Tan S.L."/>
            <person name="Tang S."/>
            <person name="Taylor M.S."/>
            <person name="Tegner J."/>
            <person name="Teichmann S.A."/>
            <person name="Ueda H.R."/>
            <person name="van Nimwegen E."/>
            <person name="Verardo R."/>
            <person name="Wei C.L."/>
            <person name="Yagi K."/>
            <person name="Yamanishi H."/>
            <person name="Zabarovsky E."/>
            <person name="Zhu S."/>
            <person name="Zimmer A."/>
            <person name="Hide W."/>
            <person name="Bult C."/>
            <person name="Grimmond S.M."/>
            <person name="Teasdale R.D."/>
            <person name="Liu E.T."/>
            <person name="Brusic V."/>
            <person name="Quackenbush J."/>
            <person name="Wahlestedt C."/>
            <person name="Mattick J.S."/>
            <person name="Hume D.A."/>
            <person name="Kai C."/>
            <person name="Sasaki D."/>
            <person name="Tomaru Y."/>
            <person name="Fukuda S."/>
            <person name="Kanamori-Katayama M."/>
            <person name="Suzuki M."/>
            <person name="Aoki J."/>
            <person name="Arakawa T."/>
            <person name="Iida J."/>
            <person name="Imamura K."/>
            <person name="Itoh M."/>
            <person name="Kato T."/>
            <person name="Kawaji H."/>
            <person name="Kawagashira N."/>
            <person name="Kawashima T."/>
            <person name="Kojima M."/>
            <person name="Kondo S."/>
            <person name="Konno H."/>
            <person name="Nakano K."/>
            <person name="Ninomiya N."/>
            <person name="Nishio T."/>
            <person name="Okada M."/>
            <person name="Plessy C."/>
            <person name="Shibata K."/>
            <person name="Shiraki T."/>
            <person name="Suzuki S."/>
            <person name="Tagami M."/>
            <person name="Waki K."/>
            <person name="Watahiki A."/>
            <person name="Okamura-Oho Y."/>
            <person name="Suzuki H."/>
            <person name="Kawai J."/>
            <person name="Hayashizaki Y."/>
        </authorList>
    </citation>
    <scope>NUCLEOTIDE SEQUENCE [LARGE SCALE MRNA]</scope>
    <source>
        <strain>C57BL/6J</strain>
        <tissue>Bone marrow</tissue>
        <tissue>Placenta</tissue>
    </source>
</reference>
<reference key="3">
    <citation type="journal article" date="2009" name="PLoS Biol.">
        <title>Lineage-specific biology revealed by a finished genome assembly of the mouse.</title>
        <authorList>
            <person name="Church D.M."/>
            <person name="Goodstadt L."/>
            <person name="Hillier L.W."/>
            <person name="Zody M.C."/>
            <person name="Goldstein S."/>
            <person name="She X."/>
            <person name="Bult C.J."/>
            <person name="Agarwala R."/>
            <person name="Cherry J.L."/>
            <person name="DiCuccio M."/>
            <person name="Hlavina W."/>
            <person name="Kapustin Y."/>
            <person name="Meric P."/>
            <person name="Maglott D."/>
            <person name="Birtle Z."/>
            <person name="Marques A.C."/>
            <person name="Graves T."/>
            <person name="Zhou S."/>
            <person name="Teague B."/>
            <person name="Potamousis K."/>
            <person name="Churas C."/>
            <person name="Place M."/>
            <person name="Herschleb J."/>
            <person name="Runnheim R."/>
            <person name="Forrest D."/>
            <person name="Amos-Landgraf J."/>
            <person name="Schwartz D.C."/>
            <person name="Cheng Z."/>
            <person name="Lindblad-Toh K."/>
            <person name="Eichler E.E."/>
            <person name="Ponting C.P."/>
        </authorList>
    </citation>
    <scope>NUCLEOTIDE SEQUENCE [LARGE SCALE GENOMIC DNA]</scope>
    <source>
        <strain>C57BL/6J</strain>
    </source>
</reference>
<reference key="4">
    <citation type="submission" date="2005-07" db="EMBL/GenBank/DDBJ databases">
        <authorList>
            <person name="Mural R.J."/>
            <person name="Adams M.D."/>
            <person name="Myers E.W."/>
            <person name="Smith H.O."/>
            <person name="Venter J.C."/>
        </authorList>
    </citation>
    <scope>NUCLEOTIDE SEQUENCE [LARGE SCALE GENOMIC DNA]</scope>
</reference>
<reference key="5">
    <citation type="journal article" date="2010" name="Cell">
        <title>A tissue-specific atlas of mouse protein phosphorylation and expression.</title>
        <authorList>
            <person name="Huttlin E.L."/>
            <person name="Jedrychowski M.P."/>
            <person name="Elias J.E."/>
            <person name="Goswami T."/>
            <person name="Rad R."/>
            <person name="Beausoleil S.A."/>
            <person name="Villen J."/>
            <person name="Haas W."/>
            <person name="Sowa M.E."/>
            <person name="Gygi S.P."/>
        </authorList>
    </citation>
    <scope>IDENTIFICATION BY MASS SPECTROMETRY [LARGE SCALE ANALYSIS]</scope>
    <source>
        <tissue>Brain</tissue>
        <tissue>Brown adipose tissue</tissue>
        <tissue>Heart</tissue>
        <tissue>Kidney</tissue>
        <tissue>Liver</tissue>
        <tissue>Lung</tissue>
        <tissue>Pancreas</tissue>
        <tissue>Spleen</tissue>
        <tissue>Testis</tissue>
    </source>
</reference>
<reference key="6">
    <citation type="journal article" date="2013" name="Mol. Cell">
        <title>SIRT5-mediated lysine desuccinylation impacts diverse metabolic pathways.</title>
        <authorList>
            <person name="Park J."/>
            <person name="Chen Y."/>
            <person name="Tishkoff D.X."/>
            <person name="Peng C."/>
            <person name="Tan M."/>
            <person name="Dai L."/>
            <person name="Xie Z."/>
            <person name="Zhang Y."/>
            <person name="Zwaans B.M."/>
            <person name="Skinner M.E."/>
            <person name="Lombard D.B."/>
            <person name="Zhao Y."/>
        </authorList>
    </citation>
    <scope>ACETYLATION [LARGE SCALE ANALYSIS] AT LYS-438</scope>
    <scope>IDENTIFICATION BY MASS SPECTROMETRY [LARGE SCALE ANALYSIS]</scope>
    <source>
        <tissue>Embryonic fibroblast</tissue>
    </source>
</reference>
<reference key="7">
    <citation type="journal article" date="2014" name="Mol. Cell. Proteomics">
        <title>Immunoaffinity enrichment and mass spectrometry analysis of protein methylation.</title>
        <authorList>
            <person name="Guo A."/>
            <person name="Gu H."/>
            <person name="Zhou J."/>
            <person name="Mulhern D."/>
            <person name="Wang Y."/>
            <person name="Lee K.A."/>
            <person name="Yang V."/>
            <person name="Aguiar M."/>
            <person name="Kornhauser J."/>
            <person name="Jia X."/>
            <person name="Ren J."/>
            <person name="Beausoleil S.A."/>
            <person name="Silva J.C."/>
            <person name="Vemulapalli V."/>
            <person name="Bedford M.T."/>
            <person name="Comb M.J."/>
        </authorList>
    </citation>
    <scope>METHYLATION [LARGE SCALE ANALYSIS] AT ARG-470; ARG-485; ARG-502; ARG-505 AND ARG-614</scope>
    <scope>IDENTIFICATION BY MASS SPECTROMETRY [LARGE SCALE ANALYSIS]</scope>
    <source>
        <tissue>Brain</tissue>
        <tissue>Embryo</tissue>
    </source>
</reference>
<reference key="8">
    <citation type="journal article" date="2017" name="Mol. Biol. Cell">
        <title>PRDM9 interactions with other proteins provide a link between recombination hotspots and the chromosomal axis in meiosis.</title>
        <authorList>
            <person name="Parvanov E.D."/>
            <person name="Tian H."/>
            <person name="Billings T."/>
            <person name="Saxl R.L."/>
            <person name="Spruce C."/>
            <person name="Aithal R."/>
            <person name="Krejci L."/>
            <person name="Paigen K."/>
            <person name="Petkov P.M."/>
        </authorList>
    </citation>
    <scope>INTERACTION WITH PRDM9; REC8; SYCP3 AND SYCP1</scope>
</reference>
<proteinExistence type="evidence at protein level"/>
<gene>
    <name type="primary">Ewsr1</name>
    <name type="synonym">Ews</name>
    <name type="synonym">Ewsh</name>
</gene>
<comment type="function">
    <text evidence="2">Binds to ssRNA containing the consensus sequence 5'-AGGUAA-3' (By similarity). Might function as a transcriptional repressor (By similarity).</text>
</comment>
<comment type="subunit">
    <text evidence="1 6">Binds RNA, POLR2C, SF1 and calmodulin. Interacts with PTK2B and TDRD3 (By similarity). Forms a complex with REC8, PRDM9, SYCP3 and SYCP1; complex formation is dependent of phosphorylated form of REC8 and requires PRDM9 bound to hotspot DNA; EWSR1 joins PRDM9 with the chromosomal axis through REC8 (PubMed:27932493).</text>
</comment>
<comment type="interaction">
    <interactant intactId="EBI-1606991">
        <id>Q61545</id>
    </interactant>
    <interactant intactId="EBI-1606219">
        <id>P20263</id>
        <label>Pou5f1</label>
    </interactant>
    <organismsDiffer>false</organismsDiffer>
    <experiments>13</experiments>
</comment>
<comment type="interaction">
    <interactant intactId="EBI-1606991">
        <id>Q61545</id>
    </interactant>
    <interactant intactId="EBI-6878379">
        <id>Q64012</id>
        <label>Raly</label>
    </interactant>
    <organismsDiffer>false</organismsDiffer>
    <experiments>2</experiments>
</comment>
<comment type="interaction">
    <interactant intactId="EBI-1606991">
        <id>Q61545</id>
    </interactant>
    <interactant intactId="EBI-26673088">
        <id>Q8C7B8</id>
        <label>Zswim4</label>
    </interactant>
    <organismsDiffer>false</organismsDiffer>
    <experiments>2</experiments>
</comment>
<comment type="subcellular location">
    <subcellularLocation>
        <location evidence="1">Nucleus</location>
    </subcellularLocation>
    <subcellularLocation>
        <location evidence="1">Cytoplasm</location>
    </subcellularLocation>
    <subcellularLocation>
        <location evidence="1">Cell membrane</location>
    </subcellularLocation>
    <text evidence="1">Relocates from cytoplasm to ribosomes upon PTK2B/FAK2 activation.</text>
</comment>
<comment type="PTM">
    <text evidence="1">Phosphorylated; calmodulin-binding inhibits phosphorylation of Ser-266.</text>
</comment>
<comment type="PTM">
    <text evidence="1">Highly methylated on arginine residues. Methylation is mediated by PRMT1 and, at lower level by PRMT8 (By similarity).</text>
</comment>
<comment type="miscellaneous">
    <text evidence="1">Binds calmodulin in the presence, but not in the absence, of calcium ion.</text>
</comment>
<comment type="similarity">
    <text evidence="7">Belongs to the RRM TET family.</text>
</comment>
<protein>
    <recommendedName>
        <fullName>RNA-binding protein EWS</fullName>
    </recommendedName>
</protein>